<reference key="1">
    <citation type="journal article" date="2003" name="Plant Cell">
        <title>Inflorescence deficient in abscission controls floral organ abscission in Arabidopsis and identifies a novel family of putative ligands in plants.</title>
        <authorList>
            <person name="Butenko M.A."/>
            <person name="Patterson S.E."/>
            <person name="Grini P.E."/>
            <person name="Stenvik G.-E."/>
            <person name="Amundsen S.S."/>
            <person name="Mandal A."/>
            <person name="Aalen R.B."/>
        </authorList>
    </citation>
    <scope>NUCLEOTIDE SEQUENCE [GENOMIC DNA]</scope>
    <scope>TISSUE SPECIFICITY</scope>
</reference>
<reference key="2">
    <citation type="journal article" date="2000" name="Nature">
        <title>Sequence and analysis of chromosome 1 of the plant Arabidopsis thaliana.</title>
        <authorList>
            <person name="Theologis A."/>
            <person name="Ecker J.R."/>
            <person name="Palm C.J."/>
            <person name="Federspiel N.A."/>
            <person name="Kaul S."/>
            <person name="White O."/>
            <person name="Alonso J."/>
            <person name="Altafi H."/>
            <person name="Araujo R."/>
            <person name="Bowman C.L."/>
            <person name="Brooks S.Y."/>
            <person name="Buehler E."/>
            <person name="Chan A."/>
            <person name="Chao Q."/>
            <person name="Chen H."/>
            <person name="Cheuk R.F."/>
            <person name="Chin C.W."/>
            <person name="Chung M.K."/>
            <person name="Conn L."/>
            <person name="Conway A.B."/>
            <person name="Conway A.R."/>
            <person name="Creasy T.H."/>
            <person name="Dewar K."/>
            <person name="Dunn P."/>
            <person name="Etgu P."/>
            <person name="Feldblyum T.V."/>
            <person name="Feng J.-D."/>
            <person name="Fong B."/>
            <person name="Fujii C.Y."/>
            <person name="Gill J.E."/>
            <person name="Goldsmith A.D."/>
            <person name="Haas B."/>
            <person name="Hansen N.F."/>
            <person name="Hughes B."/>
            <person name="Huizar L."/>
            <person name="Hunter J.L."/>
            <person name="Jenkins J."/>
            <person name="Johnson-Hopson C."/>
            <person name="Khan S."/>
            <person name="Khaykin E."/>
            <person name="Kim C.J."/>
            <person name="Koo H.L."/>
            <person name="Kremenetskaia I."/>
            <person name="Kurtz D.B."/>
            <person name="Kwan A."/>
            <person name="Lam B."/>
            <person name="Langin-Hooper S."/>
            <person name="Lee A."/>
            <person name="Lee J.M."/>
            <person name="Lenz C.A."/>
            <person name="Li J.H."/>
            <person name="Li Y.-P."/>
            <person name="Lin X."/>
            <person name="Liu S.X."/>
            <person name="Liu Z.A."/>
            <person name="Luros J.S."/>
            <person name="Maiti R."/>
            <person name="Marziali A."/>
            <person name="Militscher J."/>
            <person name="Miranda M."/>
            <person name="Nguyen M."/>
            <person name="Nierman W.C."/>
            <person name="Osborne B.I."/>
            <person name="Pai G."/>
            <person name="Peterson J."/>
            <person name="Pham P.K."/>
            <person name="Rizzo M."/>
            <person name="Rooney T."/>
            <person name="Rowley D."/>
            <person name="Sakano H."/>
            <person name="Salzberg S.L."/>
            <person name="Schwartz J.R."/>
            <person name="Shinn P."/>
            <person name="Southwick A.M."/>
            <person name="Sun H."/>
            <person name="Tallon L.J."/>
            <person name="Tambunga G."/>
            <person name="Toriumi M.J."/>
            <person name="Town C.D."/>
            <person name="Utterback T."/>
            <person name="Van Aken S."/>
            <person name="Vaysberg M."/>
            <person name="Vysotskaia V.S."/>
            <person name="Walker M."/>
            <person name="Wu D."/>
            <person name="Yu G."/>
            <person name="Fraser C.M."/>
            <person name="Venter J.C."/>
            <person name="Davis R.W."/>
        </authorList>
    </citation>
    <scope>NUCLEOTIDE SEQUENCE [LARGE SCALE GENOMIC DNA]</scope>
    <source>
        <strain>cv. Columbia</strain>
    </source>
</reference>
<reference key="3">
    <citation type="journal article" date="2017" name="Plant J.">
        <title>Araport11: a complete reannotation of the Arabidopsis thaliana reference genome.</title>
        <authorList>
            <person name="Cheng C.Y."/>
            <person name="Krishnakumar V."/>
            <person name="Chan A.P."/>
            <person name="Thibaud-Nissen F."/>
            <person name="Schobel S."/>
            <person name="Town C.D."/>
        </authorList>
    </citation>
    <scope>GENOME REANNOTATION</scope>
    <source>
        <strain>cv. Columbia</strain>
    </source>
</reference>
<reference key="4">
    <citation type="journal article" date="2005" name="Plant Physiol.">
        <title>Analysis of the cDNAs of hypothetical genes on Arabidopsis chromosome 2 reveals numerous transcript variants.</title>
        <authorList>
            <person name="Xiao Y.-L."/>
            <person name="Smith S.R."/>
            <person name="Ishmael N."/>
            <person name="Redman J.C."/>
            <person name="Kumar N."/>
            <person name="Monaghan E.L."/>
            <person name="Ayele M."/>
            <person name="Haas B.J."/>
            <person name="Wu H.C."/>
            <person name="Town C.D."/>
        </authorList>
    </citation>
    <scope>NUCLEOTIDE SEQUENCE [LARGE SCALE MRNA]</scope>
    <source>
        <strain>cv. Columbia</strain>
    </source>
</reference>
<reference key="5">
    <citation type="journal article" date="2008" name="Plant Cell">
        <title>The EPIP peptide of INFLORESCENCE DEFICIENT IN ABSCISSION is sufficient to induce abscission in arabidopsis through the receptor-like kinases HAESA and HAESA-LIKE2.</title>
        <authorList>
            <person name="Stenvik G.-E."/>
            <person name="Tandstad N.M."/>
            <person name="Guo Y."/>
            <person name="Shi C.-L."/>
            <person name="Kristiansen W."/>
            <person name="Holmgren A."/>
            <person name="Clark S.E."/>
            <person name="Aalen R.B."/>
            <person name="Butenko M.A."/>
        </authorList>
    </citation>
    <scope>FUNCTION</scope>
    <scope>TISSUE SPECIFICITY</scope>
</reference>
<feature type="signal peptide" evidence="2">
    <location>
        <begin position="1"/>
        <end position="27"/>
    </location>
</feature>
<feature type="chain" id="PRO_0000383593" description="Protein IDA-LIKE 5">
    <location>
        <begin position="28"/>
        <end position="111"/>
    </location>
</feature>
<feature type="region of interest" description="Disordered" evidence="3">
    <location>
        <begin position="46"/>
        <end position="65"/>
    </location>
</feature>
<feature type="compositionally biased region" description="Basic residues" evidence="3">
    <location>
        <begin position="46"/>
        <end position="56"/>
    </location>
</feature>
<feature type="sequence conflict" description="In Ref. 4; EG521009/EG521010." evidence="6" ref="4">
    <original>S</original>
    <variation>F</variation>
    <location>
        <position position="83"/>
    </location>
</feature>
<feature type="sequence conflict" description="In Ref. 4; EG521010." evidence="6" ref="4">
    <original>S</original>
    <variation>F</variation>
    <location>
        <position position="111"/>
    </location>
</feature>
<evidence type="ECO:0000250" key="1"/>
<evidence type="ECO:0000255" key="2"/>
<evidence type="ECO:0000256" key="3">
    <source>
        <dbReference type="SAM" id="MobiDB-lite"/>
    </source>
</evidence>
<evidence type="ECO:0000269" key="4">
    <source>
    </source>
</evidence>
<evidence type="ECO:0000269" key="5">
    <source>
    </source>
</evidence>
<evidence type="ECO:0000305" key="6"/>
<protein>
    <recommendedName>
        <fullName>Protein IDA-LIKE 5</fullName>
    </recommendedName>
</protein>
<name>IDL5_ARATH</name>
<sequence>MGNKRIKAMMILVVMIMMVFSWRICEADSLRRYSSSSRPQRFFKVRRPNPRNHHHQNQGFNGDDYPPESFSGFLPKTLPIPHSAPSRKHNVYGLQRTNSRSSYFWTHAHLS</sequence>
<organism>
    <name type="scientific">Arabidopsis thaliana</name>
    <name type="common">Mouse-ear cress</name>
    <dbReference type="NCBI Taxonomy" id="3702"/>
    <lineage>
        <taxon>Eukaryota</taxon>
        <taxon>Viridiplantae</taxon>
        <taxon>Streptophyta</taxon>
        <taxon>Embryophyta</taxon>
        <taxon>Tracheophyta</taxon>
        <taxon>Spermatophyta</taxon>
        <taxon>Magnoliopsida</taxon>
        <taxon>eudicotyledons</taxon>
        <taxon>Gunneridae</taxon>
        <taxon>Pentapetalae</taxon>
        <taxon>rosids</taxon>
        <taxon>malvids</taxon>
        <taxon>Brassicales</taxon>
        <taxon>Brassicaceae</taxon>
        <taxon>Camelineae</taxon>
        <taxon>Arabidopsis</taxon>
    </lineage>
</organism>
<proteinExistence type="evidence at transcript level"/>
<dbReference type="EMBL" id="AY642386">
    <property type="protein sequence ID" value="AAT66016.1"/>
    <property type="status" value="ALT_SEQ"/>
    <property type="molecule type" value="Genomic_DNA"/>
</dbReference>
<dbReference type="EMBL" id="AC002291">
    <property type="status" value="NOT_ANNOTATED_CDS"/>
    <property type="molecule type" value="Genomic_DNA"/>
</dbReference>
<dbReference type="EMBL" id="CP002684">
    <property type="status" value="NOT_ANNOTATED_CDS"/>
    <property type="molecule type" value="Genomic_DNA"/>
</dbReference>
<dbReference type="EMBL" id="EG521009">
    <property type="status" value="NOT_ANNOTATED_CDS"/>
    <property type="molecule type" value="mRNA"/>
</dbReference>
<dbReference type="EMBL" id="EG521010">
    <property type="status" value="NOT_ANNOTATED_CDS"/>
    <property type="molecule type" value="mRNA"/>
</dbReference>
<dbReference type="STRING" id="3702.Q6DUW8"/>
<dbReference type="PaxDb" id="3702-AT1G76952.1"/>
<dbReference type="Araport" id="AT1G76952"/>
<dbReference type="TAIR" id="AT1G76952">
    <property type="gene designation" value="IDL5"/>
</dbReference>
<dbReference type="HOGENOM" id="CLU_2281414_0_0_1"/>
<dbReference type="InParanoid" id="Q6DUW8"/>
<dbReference type="PRO" id="PR:Q6DUW8"/>
<dbReference type="Proteomes" id="UP000006548">
    <property type="component" value="Chromosome 1"/>
</dbReference>
<dbReference type="ExpressionAtlas" id="Q6DUW8">
    <property type="expression patterns" value="baseline and differential"/>
</dbReference>
<dbReference type="GO" id="GO:0005576">
    <property type="term" value="C:extracellular region"/>
    <property type="evidence" value="ECO:0007669"/>
    <property type="project" value="UniProtKB-SubCell"/>
</dbReference>
<dbReference type="GO" id="GO:0010227">
    <property type="term" value="P:floral organ abscission"/>
    <property type="evidence" value="ECO:0000315"/>
    <property type="project" value="TAIR"/>
</dbReference>
<dbReference type="InterPro" id="IPR039639">
    <property type="entry name" value="IDA-like"/>
</dbReference>
<dbReference type="PANTHER" id="PTHR33599">
    <property type="entry name" value="PROTEIN IDA-LIKE 5"/>
    <property type="match status" value="1"/>
</dbReference>
<dbReference type="PANTHER" id="PTHR33599:SF11">
    <property type="entry name" value="PROTEIN IDA-LIKE 5"/>
    <property type="match status" value="1"/>
</dbReference>
<accession>Q6DUW8</accession>
<keyword id="KW-1185">Reference proteome</keyword>
<keyword id="KW-0964">Secreted</keyword>
<keyword id="KW-0732">Signal</keyword>
<gene>
    <name type="primary">IDL5</name>
    <name type="ordered locus">At1g76952</name>
    <name type="ORF">F22K20</name>
</gene>
<comment type="function">
    <text evidence="5">May be involved in floral abscission.</text>
</comment>
<comment type="subcellular location">
    <subcellularLocation>
        <location evidence="1">Secreted</location>
        <location evidence="1">Extracellular space</location>
    </subcellularLocation>
</comment>
<comment type="tissue specificity">
    <text evidence="4 5">Expressed mainly in flowers. Lower levels in buds and seedlings. Detected in vascular tissues and in hydathodes.</text>
</comment>
<comment type="miscellaneous">
    <text>IDL5 is only partially redundant with IDA.</text>
</comment>
<comment type="sequence caution" evidence="6">
    <conflict type="erroneous gene model prediction">
        <sequence resource="EMBL-CDS" id="AAT66016"/>
    </conflict>
</comment>